<keyword id="KW-0997">Cell inner membrane</keyword>
<keyword id="KW-1003">Cell membrane</keyword>
<keyword id="KW-0328">Glycosyltransferase</keyword>
<keyword id="KW-0472">Membrane</keyword>
<keyword id="KW-0808">Transferase</keyword>
<protein>
    <recommendedName>
        <fullName evidence="1">TDP-N-acetylfucosamine:lipid II N-acetylfucosaminyltransferase</fullName>
        <ecNumber evidence="1">2.4.1.325</ecNumber>
    </recommendedName>
    <alternativeName>
        <fullName evidence="1">4-alpha-L-fucosyltransferase</fullName>
    </alternativeName>
    <alternativeName>
        <fullName evidence="1">TDP-Fuc4NAc:lipid II Fuc4NAc transferase</fullName>
        <shortName evidence="1">Fuc4NAc transferase</shortName>
    </alternativeName>
</protein>
<proteinExistence type="inferred from homology"/>
<dbReference type="EC" id="2.4.1.325" evidence="1"/>
<dbReference type="EMBL" id="CP000026">
    <property type="protein sequence ID" value="AAV79549.1"/>
    <property type="molecule type" value="Genomic_DNA"/>
</dbReference>
<dbReference type="RefSeq" id="WP_000217201.1">
    <property type="nucleotide sequence ID" value="NC_006511.1"/>
</dbReference>
<dbReference type="SMR" id="Q5PKK9"/>
<dbReference type="CAZy" id="GT56">
    <property type="family name" value="Glycosyltransferase Family 56"/>
</dbReference>
<dbReference type="KEGG" id="spt:SPA3767"/>
<dbReference type="HOGENOM" id="CLU_066584_0_0_6"/>
<dbReference type="UniPathway" id="UPA00566"/>
<dbReference type="Proteomes" id="UP000008185">
    <property type="component" value="Chromosome"/>
</dbReference>
<dbReference type="GO" id="GO:0005886">
    <property type="term" value="C:plasma membrane"/>
    <property type="evidence" value="ECO:0007669"/>
    <property type="project" value="UniProtKB-SubCell"/>
</dbReference>
<dbReference type="GO" id="GO:0102031">
    <property type="term" value="F:4-acetamido-4,6-dideoxy-D-galactose transferase activity"/>
    <property type="evidence" value="ECO:0007669"/>
    <property type="project" value="UniProtKB-EC"/>
</dbReference>
<dbReference type="GO" id="GO:0008417">
    <property type="term" value="F:fucosyltransferase activity"/>
    <property type="evidence" value="ECO:0007669"/>
    <property type="project" value="InterPro"/>
</dbReference>
<dbReference type="GO" id="GO:0009246">
    <property type="term" value="P:enterobacterial common antigen biosynthetic process"/>
    <property type="evidence" value="ECO:0007669"/>
    <property type="project" value="UniProtKB-UniRule"/>
</dbReference>
<dbReference type="GO" id="GO:0036065">
    <property type="term" value="P:fucosylation"/>
    <property type="evidence" value="ECO:0007669"/>
    <property type="project" value="InterPro"/>
</dbReference>
<dbReference type="HAMAP" id="MF_01002">
    <property type="entry name" value="WecF_RffT"/>
    <property type="match status" value="1"/>
</dbReference>
<dbReference type="InterPro" id="IPR009993">
    <property type="entry name" value="WecF"/>
</dbReference>
<dbReference type="NCBIfam" id="NF002753">
    <property type="entry name" value="PRK02797.1-2"/>
    <property type="match status" value="1"/>
</dbReference>
<dbReference type="NCBIfam" id="NF002754">
    <property type="entry name" value="PRK02797.1-3"/>
    <property type="match status" value="1"/>
</dbReference>
<dbReference type="Pfam" id="PF07429">
    <property type="entry name" value="Glyco_transf_56"/>
    <property type="match status" value="1"/>
</dbReference>
<sequence length="359" mass="40418">MTVLIHVLGSDIPHHNHTVLRFFNDTLAATSEHAREFMVAGEDNGFTESCPALSLRFYGSKKALAQAVIAKAKANRRQRFFFHGQFNTSLWLALLSGGIKPAQFYWHIWGADLYEVSNGLKFRLFYPLRRIAQGRVGGVFATRGDLSYFARQHPGVRGELLYFPTRMDPSLNAMAKERQRAGKLTILVGNSGDRSNQHIAALRAVYQQFGDTVNVVVPMGYPANNQAYIDEVRQAGLALFSAENLQILSEKMEFDAYLALLRQCDLGYFIFARQQGIGTLCLLIQADIPCVLNRDNPFWQDMAEQHLPVLFTTDDLNEQVVREAQRQLASVDKSGITFFSPNYLQPWHNALRIAAGEAE</sequence>
<reference key="1">
    <citation type="journal article" date="2004" name="Nat. Genet.">
        <title>Comparison of genome degradation in Paratyphi A and Typhi, human-restricted serovars of Salmonella enterica that cause typhoid.</title>
        <authorList>
            <person name="McClelland M."/>
            <person name="Sanderson K.E."/>
            <person name="Clifton S.W."/>
            <person name="Latreille P."/>
            <person name="Porwollik S."/>
            <person name="Sabo A."/>
            <person name="Meyer R."/>
            <person name="Bieri T."/>
            <person name="Ozersky P."/>
            <person name="McLellan M."/>
            <person name="Harkins C.R."/>
            <person name="Wang C."/>
            <person name="Nguyen C."/>
            <person name="Berghoff A."/>
            <person name="Elliott G."/>
            <person name="Kohlberg S."/>
            <person name="Strong C."/>
            <person name="Du F."/>
            <person name="Carter J."/>
            <person name="Kremizki C."/>
            <person name="Layman D."/>
            <person name="Leonard S."/>
            <person name="Sun H."/>
            <person name="Fulton L."/>
            <person name="Nash W."/>
            <person name="Miner T."/>
            <person name="Minx P."/>
            <person name="Delehaunty K."/>
            <person name="Fronick C."/>
            <person name="Magrini V."/>
            <person name="Nhan M."/>
            <person name="Warren W."/>
            <person name="Florea L."/>
            <person name="Spieth J."/>
            <person name="Wilson R.K."/>
        </authorList>
    </citation>
    <scope>NUCLEOTIDE SEQUENCE [LARGE SCALE GENOMIC DNA]</scope>
    <source>
        <strain>ATCC 9150 / SARB42</strain>
    </source>
</reference>
<name>WECF_SALPA</name>
<feature type="chain" id="PRO_0000216186" description="TDP-N-acetylfucosamine:lipid II N-acetylfucosaminyltransferase">
    <location>
        <begin position="1"/>
        <end position="359"/>
    </location>
</feature>
<comment type="function">
    <text evidence="1">Catalyzes the synthesis of Und-PP-GlcNAc-ManNAcA-Fuc4NAc (Lipid III), the third lipid-linked intermediate involved in ECA synthesis.</text>
</comment>
<comment type="catalytic activity">
    <reaction evidence="1">
        <text>beta-D-ManNAcA-(1-&gt;4)-alpha-D-GlcNAc-di-trans,octa-cis-undecaprenyl diphosphate + dTDP-4-acetamido-4,6-dideoxy-alpha-D-galactose = alpha-D-FucNAc4-(1-&gt;4)-beta-D-ManNAcA-(1-&gt;4)-D-GlcNAc-undecaprenyl diphosphate + dTDP + H(+)</text>
        <dbReference type="Rhea" id="RHEA:28759"/>
        <dbReference type="ChEBI" id="CHEBI:15378"/>
        <dbReference type="ChEBI" id="CHEBI:58369"/>
        <dbReference type="ChEBI" id="CHEBI:61495"/>
        <dbReference type="ChEBI" id="CHEBI:61496"/>
        <dbReference type="ChEBI" id="CHEBI:68493"/>
        <dbReference type="EC" id="2.4.1.325"/>
    </reaction>
</comment>
<comment type="pathway">
    <text evidence="1">Bacterial outer membrane biogenesis; enterobacterial common antigen biosynthesis.</text>
</comment>
<comment type="subcellular location">
    <subcellularLocation>
        <location evidence="1">Cell inner membrane</location>
        <topology evidence="1">Peripheral membrane protein</topology>
    </subcellularLocation>
</comment>
<comment type="similarity">
    <text evidence="1">Belongs to the glycosyltransferase 56 family.</text>
</comment>
<gene>
    <name evidence="1" type="primary">wecF</name>
    <name evidence="1" type="synonym">rffT</name>
    <name type="ordered locus">SPA3767</name>
</gene>
<accession>Q5PKK9</accession>
<organism>
    <name type="scientific">Salmonella paratyphi A (strain ATCC 9150 / SARB42)</name>
    <dbReference type="NCBI Taxonomy" id="295319"/>
    <lineage>
        <taxon>Bacteria</taxon>
        <taxon>Pseudomonadati</taxon>
        <taxon>Pseudomonadota</taxon>
        <taxon>Gammaproteobacteria</taxon>
        <taxon>Enterobacterales</taxon>
        <taxon>Enterobacteriaceae</taxon>
        <taxon>Salmonella</taxon>
    </lineage>
</organism>
<evidence type="ECO:0000255" key="1">
    <source>
        <dbReference type="HAMAP-Rule" id="MF_01002"/>
    </source>
</evidence>